<feature type="chain" id="PRO_0000213026" description="UPF0340 protein spr0580">
    <location>
        <begin position="1"/>
        <end position="187"/>
    </location>
</feature>
<comment type="similarity">
    <text evidence="1">Belongs to the UPF0340 family.</text>
</comment>
<comment type="sequence caution" evidence="2">
    <conflict type="erroneous initiation">
        <sequence resource="EMBL-CDS" id="AAK99384"/>
    </conflict>
</comment>
<accession>Q8DQN6</accession>
<dbReference type="EMBL" id="AE007317">
    <property type="protein sequence ID" value="AAK99384.1"/>
    <property type="status" value="ALT_INIT"/>
    <property type="molecule type" value="Genomic_DNA"/>
</dbReference>
<dbReference type="PIR" id="D97944">
    <property type="entry name" value="D97944"/>
</dbReference>
<dbReference type="RefSeq" id="NP_358174.1">
    <property type="nucleotide sequence ID" value="NC_003098.1"/>
</dbReference>
<dbReference type="RefSeq" id="WP_001006373.1">
    <property type="nucleotide sequence ID" value="NC_003098.1"/>
</dbReference>
<dbReference type="SMR" id="Q8DQN6"/>
<dbReference type="STRING" id="171101.spr0580"/>
<dbReference type="KEGG" id="spr:spr0580"/>
<dbReference type="PATRIC" id="fig|171101.6.peg.647"/>
<dbReference type="eggNOG" id="COG4475">
    <property type="taxonomic scope" value="Bacteria"/>
</dbReference>
<dbReference type="HOGENOM" id="CLU_106658_0_0_9"/>
<dbReference type="Proteomes" id="UP000000586">
    <property type="component" value="Chromosome"/>
</dbReference>
<dbReference type="Gene3D" id="3.40.50.10360">
    <property type="entry name" value="Hypothetical protein TT1679"/>
    <property type="match status" value="1"/>
</dbReference>
<dbReference type="HAMAP" id="MF_00800">
    <property type="entry name" value="UPF0340"/>
    <property type="match status" value="1"/>
</dbReference>
<dbReference type="InterPro" id="IPR028345">
    <property type="entry name" value="Antibiotic_NAT-like"/>
</dbReference>
<dbReference type="InterPro" id="IPR006340">
    <property type="entry name" value="DUF436"/>
</dbReference>
<dbReference type="NCBIfam" id="TIGR01440">
    <property type="entry name" value="TIGR01440 family protein"/>
    <property type="match status" value="1"/>
</dbReference>
<dbReference type="Pfam" id="PF04260">
    <property type="entry name" value="DUF436"/>
    <property type="match status" value="1"/>
</dbReference>
<dbReference type="PIRSF" id="PIRSF007510">
    <property type="entry name" value="UCP007510"/>
    <property type="match status" value="1"/>
</dbReference>
<dbReference type="SUPFAM" id="SSF110710">
    <property type="entry name" value="TTHA0583/YokD-like"/>
    <property type="match status" value="1"/>
</dbReference>
<organism>
    <name type="scientific">Streptococcus pneumoniae (strain ATCC BAA-255 / R6)</name>
    <dbReference type="NCBI Taxonomy" id="171101"/>
    <lineage>
        <taxon>Bacteria</taxon>
        <taxon>Bacillati</taxon>
        <taxon>Bacillota</taxon>
        <taxon>Bacilli</taxon>
        <taxon>Lactobacillales</taxon>
        <taxon>Streptococcaceae</taxon>
        <taxon>Streptococcus</taxon>
    </lineage>
</organism>
<evidence type="ECO:0000255" key="1">
    <source>
        <dbReference type="HAMAP-Rule" id="MF_00800"/>
    </source>
</evidence>
<evidence type="ECO:0000305" key="2"/>
<keyword id="KW-1185">Reference proteome</keyword>
<name>Y580_STRR6</name>
<protein>
    <recommendedName>
        <fullName evidence="1">UPF0340 protein spr0580</fullName>
    </recommendedName>
</protein>
<gene>
    <name type="ordered locus">spr0580</name>
</gene>
<reference key="1">
    <citation type="journal article" date="2001" name="J. Bacteriol.">
        <title>Genome of the bacterium Streptococcus pneumoniae strain R6.</title>
        <authorList>
            <person name="Hoskins J."/>
            <person name="Alborn W.E. Jr."/>
            <person name="Arnold J."/>
            <person name="Blaszczak L.C."/>
            <person name="Burgett S."/>
            <person name="DeHoff B.S."/>
            <person name="Estrem S.T."/>
            <person name="Fritz L."/>
            <person name="Fu D.-J."/>
            <person name="Fuller W."/>
            <person name="Geringer C."/>
            <person name="Gilmour R."/>
            <person name="Glass J.S."/>
            <person name="Khoja H."/>
            <person name="Kraft A.R."/>
            <person name="Lagace R.E."/>
            <person name="LeBlanc D.J."/>
            <person name="Lee L.N."/>
            <person name="Lefkowitz E.J."/>
            <person name="Lu J."/>
            <person name="Matsushima P."/>
            <person name="McAhren S.M."/>
            <person name="McHenney M."/>
            <person name="McLeaster K."/>
            <person name="Mundy C.W."/>
            <person name="Nicas T.I."/>
            <person name="Norris F.H."/>
            <person name="O'Gara M."/>
            <person name="Peery R.B."/>
            <person name="Robertson G.T."/>
            <person name="Rockey P."/>
            <person name="Sun P.-M."/>
            <person name="Winkler M.E."/>
            <person name="Yang Y."/>
            <person name="Young-Bellido M."/>
            <person name="Zhao G."/>
            <person name="Zook C.A."/>
            <person name="Baltz R.H."/>
            <person name="Jaskunas S.R."/>
            <person name="Rosteck P.R. Jr."/>
            <person name="Skatrud P.L."/>
            <person name="Glass J.I."/>
        </authorList>
    </citation>
    <scope>NUCLEOTIDE SEQUENCE [LARGE SCALE GENOMIC DNA]</scope>
    <source>
        <strain>ATCC BAA-255 / R6</strain>
    </source>
</reference>
<proteinExistence type="inferred from homology"/>
<sequence length="187" mass="20282">MNETQIQRETRQVVEDVLEKTNLKQGALFVLGLSSSEVLGGQIGKESSQEIGELIVETILGILGSRGIHLAVQGCEHVNRALVVERQVAEQFGLEIVSVHPTLHAGGSGQLAAFKFMQDPVEVEFIKAHAGLDIGDTAIGMHVKHVQVPIRPILREIGHAHVTALTSRPKLIGGARAHYPQDAIRKF</sequence>